<name>NDK_VIBVU</name>
<reference key="1">
    <citation type="submission" date="2002-12" db="EMBL/GenBank/DDBJ databases">
        <title>Complete genome sequence of Vibrio vulnificus CMCP6.</title>
        <authorList>
            <person name="Rhee J.H."/>
            <person name="Kim S.Y."/>
            <person name="Chung S.S."/>
            <person name="Kim J.J."/>
            <person name="Moon Y.H."/>
            <person name="Jeong H."/>
            <person name="Choy H.E."/>
        </authorList>
    </citation>
    <scope>NUCLEOTIDE SEQUENCE [LARGE SCALE GENOMIC DNA]</scope>
    <source>
        <strain>CMCP6</strain>
    </source>
</reference>
<evidence type="ECO:0000255" key="1">
    <source>
        <dbReference type="HAMAP-Rule" id="MF_00451"/>
    </source>
</evidence>
<accession>Q8DEZ5</accession>
<protein>
    <recommendedName>
        <fullName evidence="1">Nucleoside diphosphate kinase</fullName>
        <shortName evidence="1">NDK</shortName>
        <shortName evidence="1">NDP kinase</shortName>
        <ecNumber evidence="1">2.7.4.6</ecNumber>
    </recommendedName>
    <alternativeName>
        <fullName evidence="1">Nucleoside-2-P kinase</fullName>
    </alternativeName>
</protein>
<dbReference type="EC" id="2.7.4.6" evidence="1"/>
<dbReference type="EMBL" id="AE016795">
    <property type="protein sequence ID" value="AAO08953.1"/>
    <property type="molecule type" value="Genomic_DNA"/>
</dbReference>
<dbReference type="RefSeq" id="WP_011078529.1">
    <property type="nucleotide sequence ID" value="NC_004459.3"/>
</dbReference>
<dbReference type="SMR" id="Q8DEZ5"/>
<dbReference type="KEGG" id="vvu:VV1_0430"/>
<dbReference type="HOGENOM" id="CLU_060216_8_1_6"/>
<dbReference type="Proteomes" id="UP000002275">
    <property type="component" value="Chromosome 1"/>
</dbReference>
<dbReference type="GO" id="GO:0005737">
    <property type="term" value="C:cytoplasm"/>
    <property type="evidence" value="ECO:0007669"/>
    <property type="project" value="UniProtKB-SubCell"/>
</dbReference>
<dbReference type="GO" id="GO:0005524">
    <property type="term" value="F:ATP binding"/>
    <property type="evidence" value="ECO:0007669"/>
    <property type="project" value="UniProtKB-UniRule"/>
</dbReference>
<dbReference type="GO" id="GO:0046872">
    <property type="term" value="F:metal ion binding"/>
    <property type="evidence" value="ECO:0007669"/>
    <property type="project" value="UniProtKB-KW"/>
</dbReference>
<dbReference type="GO" id="GO:0004550">
    <property type="term" value="F:nucleoside diphosphate kinase activity"/>
    <property type="evidence" value="ECO:0007669"/>
    <property type="project" value="UniProtKB-UniRule"/>
</dbReference>
<dbReference type="GO" id="GO:0006241">
    <property type="term" value="P:CTP biosynthetic process"/>
    <property type="evidence" value="ECO:0007669"/>
    <property type="project" value="UniProtKB-UniRule"/>
</dbReference>
<dbReference type="GO" id="GO:0006183">
    <property type="term" value="P:GTP biosynthetic process"/>
    <property type="evidence" value="ECO:0007669"/>
    <property type="project" value="UniProtKB-UniRule"/>
</dbReference>
<dbReference type="GO" id="GO:0006228">
    <property type="term" value="P:UTP biosynthetic process"/>
    <property type="evidence" value="ECO:0007669"/>
    <property type="project" value="UniProtKB-UniRule"/>
</dbReference>
<dbReference type="CDD" id="cd04413">
    <property type="entry name" value="NDPk_I"/>
    <property type="match status" value="1"/>
</dbReference>
<dbReference type="FunFam" id="3.30.70.141:FF:000001">
    <property type="entry name" value="Nucleoside diphosphate kinase"/>
    <property type="match status" value="1"/>
</dbReference>
<dbReference type="Gene3D" id="3.30.70.141">
    <property type="entry name" value="Nucleoside diphosphate kinase-like domain"/>
    <property type="match status" value="1"/>
</dbReference>
<dbReference type="HAMAP" id="MF_00451">
    <property type="entry name" value="NDP_kinase"/>
    <property type="match status" value="1"/>
</dbReference>
<dbReference type="InterPro" id="IPR034907">
    <property type="entry name" value="NDK-like_dom"/>
</dbReference>
<dbReference type="InterPro" id="IPR036850">
    <property type="entry name" value="NDK-like_dom_sf"/>
</dbReference>
<dbReference type="InterPro" id="IPR001564">
    <property type="entry name" value="Nucleoside_diP_kinase"/>
</dbReference>
<dbReference type="InterPro" id="IPR023005">
    <property type="entry name" value="Nucleoside_diP_kinase_AS"/>
</dbReference>
<dbReference type="NCBIfam" id="NF001908">
    <property type="entry name" value="PRK00668.1"/>
    <property type="match status" value="1"/>
</dbReference>
<dbReference type="PANTHER" id="PTHR46161">
    <property type="entry name" value="NUCLEOSIDE DIPHOSPHATE KINASE"/>
    <property type="match status" value="1"/>
</dbReference>
<dbReference type="PANTHER" id="PTHR46161:SF3">
    <property type="entry name" value="NUCLEOSIDE DIPHOSPHATE KINASE DDB_G0292928-RELATED"/>
    <property type="match status" value="1"/>
</dbReference>
<dbReference type="Pfam" id="PF00334">
    <property type="entry name" value="NDK"/>
    <property type="match status" value="1"/>
</dbReference>
<dbReference type="PRINTS" id="PR01243">
    <property type="entry name" value="NUCDPKINASE"/>
</dbReference>
<dbReference type="SMART" id="SM00562">
    <property type="entry name" value="NDK"/>
    <property type="match status" value="1"/>
</dbReference>
<dbReference type="SUPFAM" id="SSF54919">
    <property type="entry name" value="Nucleoside diphosphate kinase, NDK"/>
    <property type="match status" value="1"/>
</dbReference>
<dbReference type="PROSITE" id="PS00469">
    <property type="entry name" value="NDPK"/>
    <property type="match status" value="1"/>
</dbReference>
<dbReference type="PROSITE" id="PS51374">
    <property type="entry name" value="NDPK_LIKE"/>
    <property type="match status" value="1"/>
</dbReference>
<sequence length="141" mass="15760">MALERTFSIIKPDAVERNLIGEIYHRIEKAGLRIIAAKMVHLNDEQASGFYAEHEGKEFFPALKEFMTSGPIMVQVLEGENAIARYRELMGKTNPEEAACGTIRADYALSMRHNSVHGSDSPASAAREIAFFFPESEICPR</sequence>
<feature type="chain" id="PRO_0000137073" description="Nucleoside diphosphate kinase">
    <location>
        <begin position="1"/>
        <end position="141"/>
    </location>
</feature>
<feature type="active site" description="Pros-phosphohistidine intermediate" evidence="1">
    <location>
        <position position="117"/>
    </location>
</feature>
<feature type="binding site" evidence="1">
    <location>
        <position position="11"/>
    </location>
    <ligand>
        <name>ATP</name>
        <dbReference type="ChEBI" id="CHEBI:30616"/>
    </ligand>
</feature>
<feature type="binding site" evidence="1">
    <location>
        <position position="59"/>
    </location>
    <ligand>
        <name>ATP</name>
        <dbReference type="ChEBI" id="CHEBI:30616"/>
    </ligand>
</feature>
<feature type="binding site" evidence="1">
    <location>
        <position position="87"/>
    </location>
    <ligand>
        <name>ATP</name>
        <dbReference type="ChEBI" id="CHEBI:30616"/>
    </ligand>
</feature>
<feature type="binding site" evidence="1">
    <location>
        <position position="93"/>
    </location>
    <ligand>
        <name>ATP</name>
        <dbReference type="ChEBI" id="CHEBI:30616"/>
    </ligand>
</feature>
<feature type="binding site" evidence="1">
    <location>
        <position position="104"/>
    </location>
    <ligand>
        <name>ATP</name>
        <dbReference type="ChEBI" id="CHEBI:30616"/>
    </ligand>
</feature>
<feature type="binding site" evidence="1">
    <location>
        <position position="114"/>
    </location>
    <ligand>
        <name>ATP</name>
        <dbReference type="ChEBI" id="CHEBI:30616"/>
    </ligand>
</feature>
<gene>
    <name evidence="1" type="primary">ndk</name>
    <name type="ordered locus">VV1_0430</name>
</gene>
<organism>
    <name type="scientific">Vibrio vulnificus (strain CMCP6)</name>
    <dbReference type="NCBI Taxonomy" id="216895"/>
    <lineage>
        <taxon>Bacteria</taxon>
        <taxon>Pseudomonadati</taxon>
        <taxon>Pseudomonadota</taxon>
        <taxon>Gammaproteobacteria</taxon>
        <taxon>Vibrionales</taxon>
        <taxon>Vibrionaceae</taxon>
        <taxon>Vibrio</taxon>
    </lineage>
</organism>
<proteinExistence type="inferred from homology"/>
<keyword id="KW-0067">ATP-binding</keyword>
<keyword id="KW-0963">Cytoplasm</keyword>
<keyword id="KW-0418">Kinase</keyword>
<keyword id="KW-0460">Magnesium</keyword>
<keyword id="KW-0479">Metal-binding</keyword>
<keyword id="KW-0546">Nucleotide metabolism</keyword>
<keyword id="KW-0547">Nucleotide-binding</keyword>
<keyword id="KW-0597">Phosphoprotein</keyword>
<keyword id="KW-0808">Transferase</keyword>
<comment type="function">
    <text evidence="1">Major role in the synthesis of nucleoside triphosphates other than ATP. The ATP gamma phosphate is transferred to the NDP beta phosphate via a ping-pong mechanism, using a phosphorylated active-site intermediate.</text>
</comment>
<comment type="catalytic activity">
    <reaction evidence="1">
        <text>a 2'-deoxyribonucleoside 5'-diphosphate + ATP = a 2'-deoxyribonucleoside 5'-triphosphate + ADP</text>
        <dbReference type="Rhea" id="RHEA:44640"/>
        <dbReference type="ChEBI" id="CHEBI:30616"/>
        <dbReference type="ChEBI" id="CHEBI:61560"/>
        <dbReference type="ChEBI" id="CHEBI:73316"/>
        <dbReference type="ChEBI" id="CHEBI:456216"/>
        <dbReference type="EC" id="2.7.4.6"/>
    </reaction>
</comment>
<comment type="catalytic activity">
    <reaction evidence="1">
        <text>a ribonucleoside 5'-diphosphate + ATP = a ribonucleoside 5'-triphosphate + ADP</text>
        <dbReference type="Rhea" id="RHEA:18113"/>
        <dbReference type="ChEBI" id="CHEBI:30616"/>
        <dbReference type="ChEBI" id="CHEBI:57930"/>
        <dbReference type="ChEBI" id="CHEBI:61557"/>
        <dbReference type="ChEBI" id="CHEBI:456216"/>
        <dbReference type="EC" id="2.7.4.6"/>
    </reaction>
</comment>
<comment type="cofactor">
    <cofactor evidence="1">
        <name>Mg(2+)</name>
        <dbReference type="ChEBI" id="CHEBI:18420"/>
    </cofactor>
</comment>
<comment type="subunit">
    <text evidence="1">Homotetramer.</text>
</comment>
<comment type="subcellular location">
    <subcellularLocation>
        <location evidence="1">Cytoplasm</location>
    </subcellularLocation>
</comment>
<comment type="similarity">
    <text evidence="1">Belongs to the NDK family.</text>
</comment>